<feature type="chain" id="PRO_1000006644" description="Aspartate--tRNA(Asp/Asn) ligase">
    <location>
        <begin position="1"/>
        <end position="600"/>
    </location>
</feature>
<feature type="region of interest" description="Aspartate" evidence="1">
    <location>
        <begin position="198"/>
        <end position="201"/>
    </location>
</feature>
<feature type="binding site" evidence="1">
    <location>
        <position position="174"/>
    </location>
    <ligand>
        <name>L-aspartate</name>
        <dbReference type="ChEBI" id="CHEBI:29991"/>
    </ligand>
</feature>
<feature type="binding site" evidence="1">
    <location>
        <begin position="220"/>
        <end position="222"/>
    </location>
    <ligand>
        <name>ATP</name>
        <dbReference type="ChEBI" id="CHEBI:30616"/>
    </ligand>
</feature>
<feature type="binding site" evidence="1">
    <location>
        <position position="220"/>
    </location>
    <ligand>
        <name>L-aspartate</name>
        <dbReference type="ChEBI" id="CHEBI:29991"/>
    </ligand>
</feature>
<feature type="binding site" evidence="1">
    <location>
        <position position="229"/>
    </location>
    <ligand>
        <name>ATP</name>
        <dbReference type="ChEBI" id="CHEBI:30616"/>
    </ligand>
</feature>
<feature type="binding site" evidence="1">
    <location>
        <position position="457"/>
    </location>
    <ligand>
        <name>L-aspartate</name>
        <dbReference type="ChEBI" id="CHEBI:29991"/>
    </ligand>
</feature>
<feature type="binding site" evidence="1">
    <location>
        <position position="491"/>
    </location>
    <ligand>
        <name>ATP</name>
        <dbReference type="ChEBI" id="CHEBI:30616"/>
    </ligand>
</feature>
<feature type="binding site" evidence="1">
    <location>
        <position position="498"/>
    </location>
    <ligand>
        <name>L-aspartate</name>
        <dbReference type="ChEBI" id="CHEBI:29991"/>
    </ligand>
</feature>
<feature type="binding site" evidence="1">
    <location>
        <begin position="543"/>
        <end position="546"/>
    </location>
    <ligand>
        <name>ATP</name>
        <dbReference type="ChEBI" id="CHEBI:30616"/>
    </ligand>
</feature>
<feature type="site" description="Important for tRNA non-discrimination" evidence="1">
    <location>
        <position position="32"/>
    </location>
</feature>
<feature type="site" description="Important for tRNA non-discrimination" evidence="1">
    <location>
        <position position="83"/>
    </location>
</feature>
<accession>Q1BTP1</accession>
<dbReference type="EC" id="6.1.1.23" evidence="1"/>
<dbReference type="EMBL" id="CP000378">
    <property type="protein sequence ID" value="ABF77014.1"/>
    <property type="molecule type" value="Genomic_DNA"/>
</dbReference>
<dbReference type="SMR" id="Q1BTP1"/>
<dbReference type="HOGENOM" id="CLU_014330_3_2_4"/>
<dbReference type="GO" id="GO:0005737">
    <property type="term" value="C:cytoplasm"/>
    <property type="evidence" value="ECO:0007669"/>
    <property type="project" value="UniProtKB-SubCell"/>
</dbReference>
<dbReference type="GO" id="GO:0004815">
    <property type="term" value="F:aspartate-tRNA ligase activity"/>
    <property type="evidence" value="ECO:0007669"/>
    <property type="project" value="UniProtKB-UniRule"/>
</dbReference>
<dbReference type="GO" id="GO:0050560">
    <property type="term" value="F:aspartate-tRNA(Asn) ligase activity"/>
    <property type="evidence" value="ECO:0007669"/>
    <property type="project" value="UniProtKB-EC"/>
</dbReference>
<dbReference type="GO" id="GO:0005524">
    <property type="term" value="F:ATP binding"/>
    <property type="evidence" value="ECO:0007669"/>
    <property type="project" value="UniProtKB-UniRule"/>
</dbReference>
<dbReference type="GO" id="GO:0003676">
    <property type="term" value="F:nucleic acid binding"/>
    <property type="evidence" value="ECO:0007669"/>
    <property type="project" value="InterPro"/>
</dbReference>
<dbReference type="GO" id="GO:0006422">
    <property type="term" value="P:aspartyl-tRNA aminoacylation"/>
    <property type="evidence" value="ECO:0007669"/>
    <property type="project" value="UniProtKB-UniRule"/>
</dbReference>
<dbReference type="CDD" id="cd00777">
    <property type="entry name" value="AspRS_core"/>
    <property type="match status" value="1"/>
</dbReference>
<dbReference type="CDD" id="cd04317">
    <property type="entry name" value="EcAspRS_like_N"/>
    <property type="match status" value="1"/>
</dbReference>
<dbReference type="Gene3D" id="3.30.930.10">
    <property type="entry name" value="Bira Bifunctional Protein, Domain 2"/>
    <property type="match status" value="1"/>
</dbReference>
<dbReference type="Gene3D" id="3.30.1360.30">
    <property type="entry name" value="GAD-like domain"/>
    <property type="match status" value="1"/>
</dbReference>
<dbReference type="Gene3D" id="2.40.50.140">
    <property type="entry name" value="Nucleic acid-binding proteins"/>
    <property type="match status" value="1"/>
</dbReference>
<dbReference type="HAMAP" id="MF_00044">
    <property type="entry name" value="Asp_tRNA_synth_type1"/>
    <property type="match status" value="1"/>
</dbReference>
<dbReference type="InterPro" id="IPR004364">
    <property type="entry name" value="Aa-tRNA-synt_II"/>
</dbReference>
<dbReference type="InterPro" id="IPR006195">
    <property type="entry name" value="aa-tRNA-synth_II"/>
</dbReference>
<dbReference type="InterPro" id="IPR045864">
    <property type="entry name" value="aa-tRNA-synth_II/BPL/LPL"/>
</dbReference>
<dbReference type="InterPro" id="IPR004524">
    <property type="entry name" value="Asp-tRNA-ligase_1"/>
</dbReference>
<dbReference type="InterPro" id="IPR047089">
    <property type="entry name" value="Asp-tRNA-ligase_1_N"/>
</dbReference>
<dbReference type="InterPro" id="IPR002312">
    <property type="entry name" value="Asp/Asn-tRNA-synth_IIb"/>
</dbReference>
<dbReference type="InterPro" id="IPR047090">
    <property type="entry name" value="AspRS_core"/>
</dbReference>
<dbReference type="InterPro" id="IPR004115">
    <property type="entry name" value="GAD-like_sf"/>
</dbReference>
<dbReference type="InterPro" id="IPR029351">
    <property type="entry name" value="GAD_dom"/>
</dbReference>
<dbReference type="InterPro" id="IPR012340">
    <property type="entry name" value="NA-bd_OB-fold"/>
</dbReference>
<dbReference type="InterPro" id="IPR004365">
    <property type="entry name" value="NA-bd_OB_tRNA"/>
</dbReference>
<dbReference type="NCBIfam" id="TIGR00459">
    <property type="entry name" value="aspS_bact"/>
    <property type="match status" value="1"/>
</dbReference>
<dbReference type="NCBIfam" id="NF001750">
    <property type="entry name" value="PRK00476.1"/>
    <property type="match status" value="1"/>
</dbReference>
<dbReference type="PANTHER" id="PTHR22594:SF5">
    <property type="entry name" value="ASPARTATE--TRNA LIGASE, MITOCHONDRIAL"/>
    <property type="match status" value="1"/>
</dbReference>
<dbReference type="PANTHER" id="PTHR22594">
    <property type="entry name" value="ASPARTYL/LYSYL-TRNA SYNTHETASE"/>
    <property type="match status" value="1"/>
</dbReference>
<dbReference type="Pfam" id="PF02938">
    <property type="entry name" value="GAD"/>
    <property type="match status" value="1"/>
</dbReference>
<dbReference type="Pfam" id="PF00152">
    <property type="entry name" value="tRNA-synt_2"/>
    <property type="match status" value="1"/>
</dbReference>
<dbReference type="Pfam" id="PF01336">
    <property type="entry name" value="tRNA_anti-codon"/>
    <property type="match status" value="1"/>
</dbReference>
<dbReference type="PRINTS" id="PR01042">
    <property type="entry name" value="TRNASYNTHASP"/>
</dbReference>
<dbReference type="SUPFAM" id="SSF55681">
    <property type="entry name" value="Class II aaRS and biotin synthetases"/>
    <property type="match status" value="1"/>
</dbReference>
<dbReference type="SUPFAM" id="SSF55261">
    <property type="entry name" value="GAD domain-like"/>
    <property type="match status" value="1"/>
</dbReference>
<dbReference type="SUPFAM" id="SSF50249">
    <property type="entry name" value="Nucleic acid-binding proteins"/>
    <property type="match status" value="1"/>
</dbReference>
<dbReference type="PROSITE" id="PS50862">
    <property type="entry name" value="AA_TRNA_LIGASE_II"/>
    <property type="match status" value="1"/>
</dbReference>
<keyword id="KW-0030">Aminoacyl-tRNA synthetase</keyword>
<keyword id="KW-0067">ATP-binding</keyword>
<keyword id="KW-0963">Cytoplasm</keyword>
<keyword id="KW-0436">Ligase</keyword>
<keyword id="KW-0547">Nucleotide-binding</keyword>
<keyword id="KW-0648">Protein biosynthesis</keyword>
<name>SYDND_BURO1</name>
<gene>
    <name evidence="1" type="primary">aspS</name>
    <name type="ordered locus">Bcen_2113</name>
</gene>
<reference key="1">
    <citation type="submission" date="2006-05" db="EMBL/GenBank/DDBJ databases">
        <title>Complete sequence of chromosome 1 of Burkholderia cenocepacia AU 1054.</title>
        <authorList>
            <consortium name="US DOE Joint Genome Institute"/>
            <person name="Copeland A."/>
            <person name="Lucas S."/>
            <person name="Lapidus A."/>
            <person name="Barry K."/>
            <person name="Detter J.C."/>
            <person name="Glavina del Rio T."/>
            <person name="Hammon N."/>
            <person name="Israni S."/>
            <person name="Dalin E."/>
            <person name="Tice H."/>
            <person name="Pitluck S."/>
            <person name="Chain P."/>
            <person name="Malfatti S."/>
            <person name="Shin M."/>
            <person name="Vergez L."/>
            <person name="Schmutz J."/>
            <person name="Larimer F."/>
            <person name="Land M."/>
            <person name="Hauser L."/>
            <person name="Kyrpides N."/>
            <person name="Lykidis A."/>
            <person name="LiPuma J.J."/>
            <person name="Konstantinidis K."/>
            <person name="Tiedje J.M."/>
            <person name="Richardson P."/>
        </authorList>
    </citation>
    <scope>NUCLEOTIDE SEQUENCE [LARGE SCALE GENOMIC DNA]</scope>
    <source>
        <strain>AU 1054</strain>
    </source>
</reference>
<organism>
    <name type="scientific">Burkholderia orbicola (strain AU 1054)</name>
    <dbReference type="NCBI Taxonomy" id="331271"/>
    <lineage>
        <taxon>Bacteria</taxon>
        <taxon>Pseudomonadati</taxon>
        <taxon>Pseudomonadota</taxon>
        <taxon>Betaproteobacteria</taxon>
        <taxon>Burkholderiales</taxon>
        <taxon>Burkholderiaceae</taxon>
        <taxon>Burkholderia</taxon>
        <taxon>Burkholderia cepacia complex</taxon>
        <taxon>Burkholderia orbicola</taxon>
    </lineage>
</organism>
<sequence length="600" mass="67757">MSMRTEYCGLVTEHLLGQTVSLCGWVQRRRDHGGVIFIDLRDREGLVQVVCDPDRAEMFATAEGVRNEFCVQIKGLVRNRPDGTVNAGLKSGRIEVLCHELNVLNASVTPPFQLDDDNLSETTRLTHRVLDLRRPQMQHNLRLRYRVAIEARKYLDEQGFIDIETPMLTKSTPEGARDYLVPSRVNAGQFFALPQSPQLFKQLLMVANFDRYYQITKCFRDEDLRADRQPEFTQIDCETSFLGEQEIRDLFEDMIRHIFKTTIDVELDAKFPVMPYSEAMARFGSDKPDLRVQLEFTELTDAMKDVDFKVFSTPANAKDGRVAALRVPKGGELSRGDIDGYTEFVRIYGAKGLAWIKVNEKAKGRDGLQSPIVKNLHDASIAAILERTGAEDGDIIFFAADRAKVVNDSLGALRLKIGHSEFGKANGLVQAGWKPLWVVDFPMFEYDDEDARYVAAHHPFTSPKDEHLEYLETDPGRCLAKAYDMVLNGWEIGGGSVRIHREEVQSKVFRALKIGAEEAQLKFGFLLDALQYGAPPHGGIAFGLDRIVTMMAGADSIRDVIAFPKTQRAQDLLTQAPSPVDERQLRELHIRLRQPEQPKA</sequence>
<proteinExistence type="inferred from homology"/>
<evidence type="ECO:0000255" key="1">
    <source>
        <dbReference type="HAMAP-Rule" id="MF_00044"/>
    </source>
</evidence>
<comment type="function">
    <text evidence="1">Aspartyl-tRNA synthetase with relaxed tRNA specificity since it is able to aspartylate not only its cognate tRNA(Asp) but also tRNA(Asn). Reaction proceeds in two steps: L-aspartate is first activated by ATP to form Asp-AMP and then transferred to the acceptor end of tRNA(Asp/Asn).</text>
</comment>
<comment type="catalytic activity">
    <reaction evidence="1">
        <text>tRNA(Asx) + L-aspartate + ATP = L-aspartyl-tRNA(Asx) + AMP + diphosphate</text>
        <dbReference type="Rhea" id="RHEA:18349"/>
        <dbReference type="Rhea" id="RHEA-COMP:9710"/>
        <dbReference type="Rhea" id="RHEA-COMP:9711"/>
        <dbReference type="ChEBI" id="CHEBI:29991"/>
        <dbReference type="ChEBI" id="CHEBI:30616"/>
        <dbReference type="ChEBI" id="CHEBI:33019"/>
        <dbReference type="ChEBI" id="CHEBI:78442"/>
        <dbReference type="ChEBI" id="CHEBI:78516"/>
        <dbReference type="ChEBI" id="CHEBI:456215"/>
        <dbReference type="EC" id="6.1.1.23"/>
    </reaction>
</comment>
<comment type="subunit">
    <text evidence="1">Homodimer.</text>
</comment>
<comment type="subcellular location">
    <subcellularLocation>
        <location evidence="1">Cytoplasm</location>
    </subcellularLocation>
</comment>
<comment type="similarity">
    <text evidence="1">Belongs to the class-II aminoacyl-tRNA synthetase family. Type 1 subfamily.</text>
</comment>
<protein>
    <recommendedName>
        <fullName evidence="1">Aspartate--tRNA(Asp/Asn) ligase</fullName>
        <ecNumber evidence="1">6.1.1.23</ecNumber>
    </recommendedName>
    <alternativeName>
        <fullName evidence="1">Aspartyl-tRNA synthetase</fullName>
        <shortName evidence="1">AspRS</shortName>
    </alternativeName>
    <alternativeName>
        <fullName evidence="1">Non-discriminating aspartyl-tRNA synthetase</fullName>
        <shortName evidence="1">ND-AspRS</shortName>
    </alternativeName>
</protein>